<sequence>MKSFTFLILFLFAAQSISVYAGSFHKDVKIHWGDGRGKIHDNQGKLLSLSLDKSSGSGFQSNQEFLYGKAEVQMKLVPGNSAGTVTTFYLKSPGTTWDEIDFEFLGNISGHPYTLHTNVYTKGSGDKEQQFHLWFDPTANFHTYCITWNPQRIIFTVDGIPIREFMNAESRGVPFPTKQPMRLYASLWEAEHWATRGGLEKTDWSKAPFTAYYRNYNVEGCVWVNGKSVCPANSQWFTQKLDSNGQTRMKGVQSKYMVYNYCSDKKRFPRGVPPECS</sequence>
<accession>Q9M0D1</accession>
<accession>Q94A49</accession>
<feature type="signal peptide" evidence="3">
    <location>
        <begin position="1"/>
        <end position="21"/>
    </location>
</feature>
<feature type="chain" id="PRO_0000011819" description="Xyloglucan endotransglucosylase/hydrolase protein 19">
    <location>
        <begin position="22"/>
        <end position="277"/>
    </location>
</feature>
<feature type="domain" description="GH16" evidence="4">
    <location>
        <begin position="22"/>
        <end position="213"/>
    </location>
</feature>
<feature type="active site" description="Nucleophile" evidence="5">
    <location>
        <position position="99"/>
    </location>
</feature>
<feature type="active site" description="Proton donor" evidence="5">
    <location>
        <position position="103"/>
    </location>
</feature>
<feature type="binding site" evidence="2">
    <location>
        <position position="103"/>
    </location>
    <ligand>
        <name>xyloglucan</name>
        <dbReference type="ChEBI" id="CHEBI:18233"/>
    </ligand>
</feature>
<feature type="binding site" evidence="2">
    <location>
        <begin position="116"/>
        <end position="118"/>
    </location>
    <ligand>
        <name>xyloglucan</name>
        <dbReference type="ChEBI" id="CHEBI:18233"/>
    </ligand>
</feature>
<feature type="binding site" evidence="2">
    <location>
        <begin position="126"/>
        <end position="128"/>
    </location>
    <ligand>
        <name>xyloglucan</name>
        <dbReference type="ChEBI" id="CHEBI:18233"/>
    </ligand>
</feature>
<feature type="binding site" evidence="2">
    <location>
        <begin position="192"/>
        <end position="193"/>
    </location>
    <ligand>
        <name>xyloglucan</name>
        <dbReference type="ChEBI" id="CHEBI:18233"/>
    </ligand>
</feature>
<feature type="binding site" evidence="2">
    <location>
        <position position="197"/>
    </location>
    <ligand>
        <name>xyloglucan</name>
        <dbReference type="ChEBI" id="CHEBI:18233"/>
    </ligand>
</feature>
<feature type="binding site" evidence="2">
    <location>
        <position position="267"/>
    </location>
    <ligand>
        <name>xyloglucan</name>
        <dbReference type="ChEBI" id="CHEBI:18233"/>
    </ligand>
</feature>
<feature type="site" description="Important for catalytic activity" evidence="2">
    <location>
        <position position="101"/>
    </location>
</feature>
<feature type="glycosylation site" description="N-linked (GlcNAc...) asparagine" evidence="3">
    <location>
        <position position="107"/>
    </location>
</feature>
<feature type="disulfide bond" evidence="2">
    <location>
        <begin position="221"/>
        <end position="230"/>
    </location>
</feature>
<feature type="disulfide bond" evidence="2">
    <location>
        <begin position="262"/>
        <end position="276"/>
    </location>
</feature>
<feature type="sequence conflict" description="In Ref. 3; AAK91391/AAN28826." evidence="11" ref="3">
    <original>P</original>
    <variation>T</variation>
    <location>
        <position position="112"/>
    </location>
</feature>
<name>XTH19_ARATH</name>
<gene>
    <name evidence="10" type="primary">XTH19</name>
    <name type="ordered locus">At4g30290</name>
    <name type="ORF">F17I23.370</name>
</gene>
<dbReference type="EC" id="2.4.1.207" evidence="7"/>
<dbReference type="EMBL" id="AL161576">
    <property type="protein sequence ID" value="CAB81022.1"/>
    <property type="molecule type" value="Genomic_DNA"/>
</dbReference>
<dbReference type="EMBL" id="CP002687">
    <property type="protein sequence ID" value="AEE85747.1"/>
    <property type="molecule type" value="Genomic_DNA"/>
</dbReference>
<dbReference type="EMBL" id="AY050373">
    <property type="protein sequence ID" value="AAK91391.1"/>
    <property type="molecule type" value="mRNA"/>
</dbReference>
<dbReference type="EMBL" id="AY143887">
    <property type="protein sequence ID" value="AAN28826.1"/>
    <property type="molecule type" value="mRNA"/>
</dbReference>
<dbReference type="PIR" id="B85354">
    <property type="entry name" value="B85354"/>
</dbReference>
<dbReference type="RefSeq" id="NP_194758.1">
    <property type="nucleotide sequence ID" value="NM_119175.3"/>
</dbReference>
<dbReference type="SMR" id="Q9M0D1"/>
<dbReference type="FunCoup" id="Q9M0D1">
    <property type="interactions" value="51"/>
</dbReference>
<dbReference type="STRING" id="3702.Q9M0D1"/>
<dbReference type="CAZy" id="GH16">
    <property type="family name" value="Glycoside Hydrolase Family 16"/>
</dbReference>
<dbReference type="GlyCosmos" id="Q9M0D1">
    <property type="glycosylation" value="1 site, No reported glycans"/>
</dbReference>
<dbReference type="GlyGen" id="Q9M0D1">
    <property type="glycosylation" value="1 site"/>
</dbReference>
<dbReference type="PaxDb" id="3702-AT4G30290.1"/>
<dbReference type="ProteomicsDB" id="242516"/>
<dbReference type="EnsemblPlants" id="AT4G30290.1">
    <property type="protein sequence ID" value="AT4G30290.1"/>
    <property type="gene ID" value="AT4G30290"/>
</dbReference>
<dbReference type="GeneID" id="829152"/>
<dbReference type="Gramene" id="AT4G30290.1">
    <property type="protein sequence ID" value="AT4G30290.1"/>
    <property type="gene ID" value="AT4G30290"/>
</dbReference>
<dbReference type="KEGG" id="ath:AT4G30290"/>
<dbReference type="Araport" id="AT4G30290"/>
<dbReference type="TAIR" id="AT4G30290">
    <property type="gene designation" value="XTH19"/>
</dbReference>
<dbReference type="eggNOG" id="ENOG502QQ71">
    <property type="taxonomic scope" value="Eukaryota"/>
</dbReference>
<dbReference type="HOGENOM" id="CLU_048041_0_0_1"/>
<dbReference type="InParanoid" id="Q9M0D1"/>
<dbReference type="OMA" id="IVMASLW"/>
<dbReference type="OrthoDB" id="4781at2759"/>
<dbReference type="PhylomeDB" id="Q9M0D1"/>
<dbReference type="BioCyc" id="ARA:AT4G30290-MONOMER"/>
<dbReference type="BRENDA" id="2.4.1.207">
    <property type="organism ID" value="399"/>
</dbReference>
<dbReference type="PRO" id="PR:Q9M0D1"/>
<dbReference type="Proteomes" id="UP000006548">
    <property type="component" value="Chromosome 4"/>
</dbReference>
<dbReference type="ExpressionAtlas" id="Q9M0D1">
    <property type="expression patterns" value="baseline and differential"/>
</dbReference>
<dbReference type="GO" id="GO:0048046">
    <property type="term" value="C:apoplast"/>
    <property type="evidence" value="ECO:0007669"/>
    <property type="project" value="UniProtKB-SubCell"/>
</dbReference>
<dbReference type="GO" id="GO:0004553">
    <property type="term" value="F:hydrolase activity, hydrolyzing O-glycosyl compounds"/>
    <property type="evidence" value="ECO:0007669"/>
    <property type="project" value="InterPro"/>
</dbReference>
<dbReference type="GO" id="GO:0030247">
    <property type="term" value="F:polysaccharide binding"/>
    <property type="evidence" value="ECO:0000250"/>
    <property type="project" value="UniProtKB"/>
</dbReference>
<dbReference type="GO" id="GO:0016762">
    <property type="term" value="F:xyloglucan:xyloglucosyl transferase activity"/>
    <property type="evidence" value="ECO:0000314"/>
    <property type="project" value="TAIR"/>
</dbReference>
<dbReference type="GO" id="GO:0051301">
    <property type="term" value="P:cell division"/>
    <property type="evidence" value="ECO:0000315"/>
    <property type="project" value="TAIR"/>
</dbReference>
<dbReference type="GO" id="GO:0042546">
    <property type="term" value="P:cell wall biogenesis"/>
    <property type="evidence" value="ECO:0007669"/>
    <property type="project" value="InterPro"/>
</dbReference>
<dbReference type="GO" id="GO:0071555">
    <property type="term" value="P:cell wall organization"/>
    <property type="evidence" value="ECO:0007669"/>
    <property type="project" value="UniProtKB-KW"/>
</dbReference>
<dbReference type="GO" id="GO:0071365">
    <property type="term" value="P:cellular response to auxin stimulus"/>
    <property type="evidence" value="ECO:0000270"/>
    <property type="project" value="TAIR"/>
</dbReference>
<dbReference type="GO" id="GO:0010411">
    <property type="term" value="P:xyloglucan metabolic process"/>
    <property type="evidence" value="ECO:0000314"/>
    <property type="project" value="TAIR"/>
</dbReference>
<dbReference type="CDD" id="cd02176">
    <property type="entry name" value="GH16_XET"/>
    <property type="match status" value="1"/>
</dbReference>
<dbReference type="FunFam" id="2.60.120.200:FF:000025">
    <property type="entry name" value="Xyloglucan endotransglucosylase/hydrolase"/>
    <property type="match status" value="1"/>
</dbReference>
<dbReference type="Gene3D" id="2.60.120.200">
    <property type="match status" value="1"/>
</dbReference>
<dbReference type="InterPro" id="IPR044791">
    <property type="entry name" value="Beta-glucanase/XTH"/>
</dbReference>
<dbReference type="InterPro" id="IPR008264">
    <property type="entry name" value="Beta_glucanase"/>
</dbReference>
<dbReference type="InterPro" id="IPR013320">
    <property type="entry name" value="ConA-like_dom_sf"/>
</dbReference>
<dbReference type="InterPro" id="IPR000757">
    <property type="entry name" value="GH16"/>
</dbReference>
<dbReference type="InterPro" id="IPR008263">
    <property type="entry name" value="GH16_AS"/>
</dbReference>
<dbReference type="InterPro" id="IPR010713">
    <property type="entry name" value="XET_C"/>
</dbReference>
<dbReference type="InterPro" id="IPR016455">
    <property type="entry name" value="XTH"/>
</dbReference>
<dbReference type="PANTHER" id="PTHR31062">
    <property type="entry name" value="XYLOGLUCAN ENDOTRANSGLUCOSYLASE/HYDROLASE PROTEIN 8-RELATED"/>
    <property type="match status" value="1"/>
</dbReference>
<dbReference type="Pfam" id="PF00722">
    <property type="entry name" value="Glyco_hydro_16"/>
    <property type="match status" value="1"/>
</dbReference>
<dbReference type="Pfam" id="PF06955">
    <property type="entry name" value="XET_C"/>
    <property type="match status" value="1"/>
</dbReference>
<dbReference type="PIRSF" id="PIRSF005604">
    <property type="entry name" value="XET"/>
    <property type="match status" value="1"/>
</dbReference>
<dbReference type="PRINTS" id="PR00737">
    <property type="entry name" value="GLHYDRLASE16"/>
</dbReference>
<dbReference type="SUPFAM" id="SSF49899">
    <property type="entry name" value="Concanavalin A-like lectins/glucanases"/>
    <property type="match status" value="1"/>
</dbReference>
<dbReference type="PROSITE" id="PS01034">
    <property type="entry name" value="GH16_1"/>
    <property type="match status" value="1"/>
</dbReference>
<dbReference type="PROSITE" id="PS51762">
    <property type="entry name" value="GH16_2"/>
    <property type="match status" value="1"/>
</dbReference>
<keyword id="KW-0052">Apoplast</keyword>
<keyword id="KW-0134">Cell wall</keyword>
<keyword id="KW-0961">Cell wall biogenesis/degradation</keyword>
<keyword id="KW-1015">Disulfide bond</keyword>
<keyword id="KW-0325">Glycoprotein</keyword>
<keyword id="KW-0326">Glycosidase</keyword>
<keyword id="KW-0378">Hydrolase</keyword>
<keyword id="KW-1185">Reference proteome</keyword>
<keyword id="KW-0964">Secreted</keyword>
<keyword id="KW-0732">Signal</keyword>
<keyword id="KW-0808">Transferase</keyword>
<proteinExistence type="evidence at protein level"/>
<organism>
    <name type="scientific">Arabidopsis thaliana</name>
    <name type="common">Mouse-ear cress</name>
    <dbReference type="NCBI Taxonomy" id="3702"/>
    <lineage>
        <taxon>Eukaryota</taxon>
        <taxon>Viridiplantae</taxon>
        <taxon>Streptophyta</taxon>
        <taxon>Embryophyta</taxon>
        <taxon>Tracheophyta</taxon>
        <taxon>Spermatophyta</taxon>
        <taxon>Magnoliopsida</taxon>
        <taxon>eudicotyledons</taxon>
        <taxon>Gunneridae</taxon>
        <taxon>Pentapetalae</taxon>
        <taxon>rosids</taxon>
        <taxon>malvids</taxon>
        <taxon>Brassicales</taxon>
        <taxon>Brassicaceae</taxon>
        <taxon>Camelineae</taxon>
        <taxon>Arabidopsis</taxon>
    </lineage>
</organism>
<protein>
    <recommendedName>
        <fullName evidence="11">Xyloglucan endotransglucosylase/hydrolase protein 19</fullName>
        <shortName evidence="9">At-XTH19</shortName>
        <shortName evidence="9">XTH-19</shortName>
        <ecNumber evidence="7">2.4.1.207</ecNumber>
    </recommendedName>
</protein>
<evidence type="ECO:0000250" key="1"/>
<evidence type="ECO:0000250" key="2">
    <source>
        <dbReference type="UniProtKB" id="Q8GZD5"/>
    </source>
</evidence>
<evidence type="ECO:0000255" key="3"/>
<evidence type="ECO:0000255" key="4">
    <source>
        <dbReference type="PROSITE-ProRule" id="PRU01098"/>
    </source>
</evidence>
<evidence type="ECO:0000255" key="5">
    <source>
        <dbReference type="PROSITE-ProRule" id="PRU10064"/>
    </source>
</evidence>
<evidence type="ECO:0000269" key="6">
    <source>
    </source>
</evidence>
<evidence type="ECO:0000269" key="7">
    <source>
    </source>
</evidence>
<evidence type="ECO:0000269" key="8">
    <source>
    </source>
</evidence>
<evidence type="ECO:0000303" key="9">
    <source>
    </source>
</evidence>
<evidence type="ECO:0000303" key="10">
    <source>
    </source>
</evidence>
<evidence type="ECO:0000305" key="11"/>
<evidence type="ECO:0000305" key="12">
    <source>
    </source>
</evidence>
<reference key="1">
    <citation type="journal article" date="1999" name="Nature">
        <title>Sequence and analysis of chromosome 4 of the plant Arabidopsis thaliana.</title>
        <authorList>
            <person name="Mayer K.F.X."/>
            <person name="Schueller C."/>
            <person name="Wambutt R."/>
            <person name="Murphy G."/>
            <person name="Volckaert G."/>
            <person name="Pohl T."/>
            <person name="Duesterhoeft A."/>
            <person name="Stiekema W."/>
            <person name="Entian K.-D."/>
            <person name="Terryn N."/>
            <person name="Harris B."/>
            <person name="Ansorge W."/>
            <person name="Brandt P."/>
            <person name="Grivell L.A."/>
            <person name="Rieger M."/>
            <person name="Weichselgartner M."/>
            <person name="de Simone V."/>
            <person name="Obermaier B."/>
            <person name="Mache R."/>
            <person name="Mueller M."/>
            <person name="Kreis M."/>
            <person name="Delseny M."/>
            <person name="Puigdomenech P."/>
            <person name="Watson M."/>
            <person name="Schmidtheini T."/>
            <person name="Reichert B."/>
            <person name="Portetelle D."/>
            <person name="Perez-Alonso M."/>
            <person name="Boutry M."/>
            <person name="Bancroft I."/>
            <person name="Vos P."/>
            <person name="Hoheisel J."/>
            <person name="Zimmermann W."/>
            <person name="Wedler H."/>
            <person name="Ridley P."/>
            <person name="Langham S.-A."/>
            <person name="McCullagh B."/>
            <person name="Bilham L."/>
            <person name="Robben J."/>
            <person name="van der Schueren J."/>
            <person name="Grymonprez B."/>
            <person name="Chuang Y.-J."/>
            <person name="Vandenbussche F."/>
            <person name="Braeken M."/>
            <person name="Weltjens I."/>
            <person name="Voet M."/>
            <person name="Bastiaens I."/>
            <person name="Aert R."/>
            <person name="Defoor E."/>
            <person name="Weitzenegger T."/>
            <person name="Bothe G."/>
            <person name="Ramsperger U."/>
            <person name="Hilbert H."/>
            <person name="Braun M."/>
            <person name="Holzer E."/>
            <person name="Brandt A."/>
            <person name="Peters S."/>
            <person name="van Staveren M."/>
            <person name="Dirkse W."/>
            <person name="Mooijman P."/>
            <person name="Klein Lankhorst R."/>
            <person name="Rose M."/>
            <person name="Hauf J."/>
            <person name="Koetter P."/>
            <person name="Berneiser S."/>
            <person name="Hempel S."/>
            <person name="Feldpausch M."/>
            <person name="Lamberth S."/>
            <person name="Van den Daele H."/>
            <person name="De Keyser A."/>
            <person name="Buysshaert C."/>
            <person name="Gielen J."/>
            <person name="Villarroel R."/>
            <person name="De Clercq R."/>
            <person name="van Montagu M."/>
            <person name="Rogers J."/>
            <person name="Cronin A."/>
            <person name="Quail M.A."/>
            <person name="Bray-Allen S."/>
            <person name="Clark L."/>
            <person name="Doggett J."/>
            <person name="Hall S."/>
            <person name="Kay M."/>
            <person name="Lennard N."/>
            <person name="McLay K."/>
            <person name="Mayes R."/>
            <person name="Pettett A."/>
            <person name="Rajandream M.A."/>
            <person name="Lyne M."/>
            <person name="Benes V."/>
            <person name="Rechmann S."/>
            <person name="Borkova D."/>
            <person name="Bloecker H."/>
            <person name="Scharfe M."/>
            <person name="Grimm M."/>
            <person name="Loehnert T.-H."/>
            <person name="Dose S."/>
            <person name="de Haan M."/>
            <person name="Maarse A.C."/>
            <person name="Schaefer M."/>
            <person name="Mueller-Auer S."/>
            <person name="Gabel C."/>
            <person name="Fuchs M."/>
            <person name="Fartmann B."/>
            <person name="Granderath K."/>
            <person name="Dauner D."/>
            <person name="Herzl A."/>
            <person name="Neumann S."/>
            <person name="Argiriou A."/>
            <person name="Vitale D."/>
            <person name="Liguori R."/>
            <person name="Piravandi E."/>
            <person name="Massenet O."/>
            <person name="Quigley F."/>
            <person name="Clabauld G."/>
            <person name="Muendlein A."/>
            <person name="Felber R."/>
            <person name="Schnabl S."/>
            <person name="Hiller R."/>
            <person name="Schmidt W."/>
            <person name="Lecharny A."/>
            <person name="Aubourg S."/>
            <person name="Chefdor F."/>
            <person name="Cooke R."/>
            <person name="Berger C."/>
            <person name="Monfort A."/>
            <person name="Casacuberta E."/>
            <person name="Gibbons T."/>
            <person name="Weber N."/>
            <person name="Vandenbol M."/>
            <person name="Bargues M."/>
            <person name="Terol J."/>
            <person name="Torres A."/>
            <person name="Perez-Perez A."/>
            <person name="Purnelle B."/>
            <person name="Bent E."/>
            <person name="Johnson S."/>
            <person name="Tacon D."/>
            <person name="Jesse T."/>
            <person name="Heijnen L."/>
            <person name="Schwarz S."/>
            <person name="Scholler P."/>
            <person name="Heber S."/>
            <person name="Francs P."/>
            <person name="Bielke C."/>
            <person name="Frishman D."/>
            <person name="Haase D."/>
            <person name="Lemcke K."/>
            <person name="Mewes H.-W."/>
            <person name="Stocker S."/>
            <person name="Zaccaria P."/>
            <person name="Bevan M."/>
            <person name="Wilson R.K."/>
            <person name="de la Bastide M."/>
            <person name="Habermann K."/>
            <person name="Parnell L."/>
            <person name="Dedhia N."/>
            <person name="Gnoj L."/>
            <person name="Schutz K."/>
            <person name="Huang E."/>
            <person name="Spiegel L."/>
            <person name="Sekhon M."/>
            <person name="Murray J."/>
            <person name="Sheet P."/>
            <person name="Cordes M."/>
            <person name="Abu-Threideh J."/>
            <person name="Stoneking T."/>
            <person name="Kalicki J."/>
            <person name="Graves T."/>
            <person name="Harmon G."/>
            <person name="Edwards J."/>
            <person name="Latreille P."/>
            <person name="Courtney L."/>
            <person name="Cloud J."/>
            <person name="Abbott A."/>
            <person name="Scott K."/>
            <person name="Johnson D."/>
            <person name="Minx P."/>
            <person name="Bentley D."/>
            <person name="Fulton B."/>
            <person name="Miller N."/>
            <person name="Greco T."/>
            <person name="Kemp K."/>
            <person name="Kramer J."/>
            <person name="Fulton L."/>
            <person name="Mardis E."/>
            <person name="Dante M."/>
            <person name="Pepin K."/>
            <person name="Hillier L.W."/>
            <person name="Nelson J."/>
            <person name="Spieth J."/>
            <person name="Ryan E."/>
            <person name="Andrews S."/>
            <person name="Geisel C."/>
            <person name="Layman D."/>
            <person name="Du H."/>
            <person name="Ali J."/>
            <person name="Berghoff A."/>
            <person name="Jones K."/>
            <person name="Drone K."/>
            <person name="Cotton M."/>
            <person name="Joshu C."/>
            <person name="Antonoiu B."/>
            <person name="Zidanic M."/>
            <person name="Strong C."/>
            <person name="Sun H."/>
            <person name="Lamar B."/>
            <person name="Yordan C."/>
            <person name="Ma P."/>
            <person name="Zhong J."/>
            <person name="Preston R."/>
            <person name="Vil D."/>
            <person name="Shekher M."/>
            <person name="Matero A."/>
            <person name="Shah R."/>
            <person name="Swaby I.K."/>
            <person name="O'Shaughnessy A."/>
            <person name="Rodriguez M."/>
            <person name="Hoffman J."/>
            <person name="Till S."/>
            <person name="Granat S."/>
            <person name="Shohdy N."/>
            <person name="Hasegawa A."/>
            <person name="Hameed A."/>
            <person name="Lodhi M."/>
            <person name="Johnson A."/>
            <person name="Chen E."/>
            <person name="Marra M.A."/>
            <person name="Martienssen R."/>
            <person name="McCombie W.R."/>
        </authorList>
    </citation>
    <scope>NUCLEOTIDE SEQUENCE [LARGE SCALE GENOMIC DNA]</scope>
    <source>
        <strain>cv. Columbia</strain>
    </source>
</reference>
<reference key="2">
    <citation type="journal article" date="2017" name="Plant J.">
        <title>Araport11: a complete reannotation of the Arabidopsis thaliana reference genome.</title>
        <authorList>
            <person name="Cheng C.Y."/>
            <person name="Krishnakumar V."/>
            <person name="Chan A.P."/>
            <person name="Thibaud-Nissen F."/>
            <person name="Schobel S."/>
            <person name="Town C.D."/>
        </authorList>
    </citation>
    <scope>GENOME REANNOTATION</scope>
    <source>
        <strain>cv. Columbia</strain>
    </source>
</reference>
<reference key="3">
    <citation type="journal article" date="2003" name="Science">
        <title>Empirical analysis of transcriptional activity in the Arabidopsis genome.</title>
        <authorList>
            <person name="Yamada K."/>
            <person name="Lim J."/>
            <person name="Dale J.M."/>
            <person name="Chen H."/>
            <person name="Shinn P."/>
            <person name="Palm C.J."/>
            <person name="Southwick A.M."/>
            <person name="Wu H.C."/>
            <person name="Kim C.J."/>
            <person name="Nguyen M."/>
            <person name="Pham P.K."/>
            <person name="Cheuk R.F."/>
            <person name="Karlin-Newmann G."/>
            <person name="Liu S.X."/>
            <person name="Lam B."/>
            <person name="Sakano H."/>
            <person name="Wu T."/>
            <person name="Yu G."/>
            <person name="Miranda M."/>
            <person name="Quach H.L."/>
            <person name="Tripp M."/>
            <person name="Chang C.H."/>
            <person name="Lee J.M."/>
            <person name="Toriumi M.J."/>
            <person name="Chan M.M."/>
            <person name="Tang C.C."/>
            <person name="Onodera C.S."/>
            <person name="Deng J.M."/>
            <person name="Akiyama K."/>
            <person name="Ansari Y."/>
            <person name="Arakawa T."/>
            <person name="Banh J."/>
            <person name="Banno F."/>
            <person name="Bowser L."/>
            <person name="Brooks S.Y."/>
            <person name="Carninci P."/>
            <person name="Chao Q."/>
            <person name="Choy N."/>
            <person name="Enju A."/>
            <person name="Goldsmith A.D."/>
            <person name="Gurjal M."/>
            <person name="Hansen N.F."/>
            <person name="Hayashizaki Y."/>
            <person name="Johnson-Hopson C."/>
            <person name="Hsuan V.W."/>
            <person name="Iida K."/>
            <person name="Karnes M."/>
            <person name="Khan S."/>
            <person name="Koesema E."/>
            <person name="Ishida J."/>
            <person name="Jiang P.X."/>
            <person name="Jones T."/>
            <person name="Kawai J."/>
            <person name="Kamiya A."/>
            <person name="Meyers C."/>
            <person name="Nakajima M."/>
            <person name="Narusaka M."/>
            <person name="Seki M."/>
            <person name="Sakurai T."/>
            <person name="Satou M."/>
            <person name="Tamse R."/>
            <person name="Vaysberg M."/>
            <person name="Wallender E.K."/>
            <person name="Wong C."/>
            <person name="Yamamura Y."/>
            <person name="Yuan S."/>
            <person name="Shinozaki K."/>
            <person name="Davis R.W."/>
            <person name="Theologis A."/>
            <person name="Ecker J.R."/>
        </authorList>
    </citation>
    <scope>NUCLEOTIDE SEQUENCE [LARGE SCALE MRNA]</scope>
    <source>
        <strain>cv. Columbia</strain>
    </source>
</reference>
<reference key="4">
    <citation type="journal article" date="2001" name="Plant Cell Physiol.">
        <title>A comprehensive expression analysis of all members of a gene family encoding cell-wall enzymes allowed us to predict cis-regulatory regions involved in cell-wall construction in specific organs of Arabidopsis.</title>
        <authorList>
            <person name="Yokoyama R."/>
            <person name="Nishitani K."/>
        </authorList>
    </citation>
    <scope>TISSUE SPECIFICITY</scope>
    <scope>INDUCTION</scope>
</reference>
<reference key="5">
    <citation type="journal article" date="2002" name="Plant Cell Physiol.">
        <title>The XTH family of enzymes involved in xyloglucan endotransglucosylation and endohydrolysis: current perspectives and a new unifying nomenclature.</title>
        <authorList>
            <person name="Rose J.K.C."/>
            <person name="Braam J."/>
            <person name="Fry S.C."/>
            <person name="Nishitani K."/>
        </authorList>
    </citation>
    <scope>NOMENCLATURE</scope>
</reference>
<reference key="6">
    <citation type="journal article" date="2011" name="J. Exp. Bot.">
        <title>Differences in enzymic properties of five recombinant xyloglucan endotransglucosylase/hydrolase (XTH) proteins of Arabidopsis thaliana.</title>
        <authorList>
            <person name="Maris A."/>
            <person name="Kaewthai N."/>
            <person name="Ekloef J.M."/>
            <person name="Miller J.G."/>
            <person name="Brumer H."/>
            <person name="Fry S.C."/>
            <person name="Verbelen J.P."/>
            <person name="Vissenberg K."/>
        </authorList>
    </citation>
    <scope>FUNCTION</scope>
    <scope>CATALYTIC ACTIVITY</scope>
    <scope>BIOPHYSICOCHEMICAL PROPERTIES</scope>
</reference>
<reference key="7">
    <citation type="journal article" date="2013" name="J. Exp. Bot.">
        <title>Xyloglucan endotransglucosylase/hydrolase (XTH) overexpression affects growth and cell wall mechanics in etiolated Arabidopsis hypocotyls.</title>
        <authorList>
            <person name="Miedes E."/>
            <person name="Suslov D."/>
            <person name="Vandenbussche F."/>
            <person name="Kenobi K."/>
            <person name="Ivakov A."/>
            <person name="Van Der Straeten D."/>
            <person name="Lorences E.P."/>
            <person name="Mellerowicz E.J."/>
            <person name="Verbelen J.P."/>
            <person name="Vissenberg K."/>
        </authorList>
    </citation>
    <scope>FUNCTION</scope>
</reference>
<reference key="8">
    <citation type="journal article" date="2014" name="Plant J.">
        <title>XTH20 and XTH19 regulated by ANAC071 under auxin flow are involved in cell proliferation in incised Arabidopsis inflorescence stems.</title>
        <authorList>
            <person name="Pitaksaringkarn W."/>
            <person name="Matsuoka K."/>
            <person name="Asahina M."/>
            <person name="Miura K."/>
            <person name="Sage-Ono K."/>
            <person name="Ono M."/>
            <person name="Yokoyama R."/>
            <person name="Nishitani K."/>
            <person name="Ishii T."/>
            <person name="Iwai H."/>
            <person name="Satoh S."/>
        </authorList>
    </citation>
    <scope>FUNCTION</scope>
</reference>
<comment type="function">
    <text evidence="7 8 12">Possesses xyloglucan endotransglucosylase (XET) activity in vitro. Does not possess xyloglucan endohydrolysis (XEH) activity (PubMed:20732879). Cleaves and religates xyloglucan polymers, an essential constituent of the primary cell wall, and thereby participates in cell wall construction of growing tissues (PubMed:23585673). Involved in cell proliferation in the tissue reunion process of wounded inflorescence stems. Maybe a downstream target of NAC071 as a consequence of auxin action in wounded stems (PubMed:25182467).</text>
</comment>
<comment type="catalytic activity">
    <reaction evidence="7">
        <text>breaks a beta-(1-&gt;4) bond in the backbone of a xyloglucan and transfers the xyloglucanyl segment on to O-4 of the non-reducing terminal glucose residue of an acceptor, which can be a xyloglucan or an oligosaccharide of xyloglucan.</text>
        <dbReference type="EC" id="2.4.1.207"/>
    </reaction>
</comment>
<comment type="biophysicochemical properties">
    <phDependence>
        <text evidence="7">Optimum pH is 7.0.</text>
    </phDependence>
</comment>
<comment type="subcellular location">
    <subcellularLocation>
        <location evidence="11">Secreted</location>
        <location evidence="11">Cell wall</location>
    </subcellularLocation>
    <subcellularLocation>
        <location evidence="11">Secreted</location>
        <location evidence="11">Extracellular space</location>
        <location evidence="11">Apoplast</location>
    </subcellularLocation>
</comment>
<comment type="tissue specificity">
    <text evidence="6">Root specific.</text>
</comment>
<comment type="induction">
    <text evidence="6">By auxin.</text>
</comment>
<comment type="PTM">
    <text evidence="1">Contains at least one intrachain disulfide bond essential for its enzymatic activity.</text>
</comment>
<comment type="similarity">
    <text evidence="11">Belongs to the glycosyl hydrolase 16 family. XTH group 2 subfamily.</text>
</comment>